<feature type="chain" id="PRO_0000157598" description="Large ribosomal subunit protein bL12">
    <location>
        <begin position="1"/>
        <end position="125"/>
    </location>
</feature>
<reference key="1">
    <citation type="journal article" date="2002" name="Genome Res.">
        <title>A complete sequence of the T. tengcongensis genome.</title>
        <authorList>
            <person name="Bao Q."/>
            <person name="Tian Y."/>
            <person name="Li W."/>
            <person name="Xu Z."/>
            <person name="Xuan Z."/>
            <person name="Hu S."/>
            <person name="Dong W."/>
            <person name="Yang J."/>
            <person name="Chen Y."/>
            <person name="Xue Y."/>
            <person name="Xu Y."/>
            <person name="Lai X."/>
            <person name="Huang L."/>
            <person name="Dong X."/>
            <person name="Ma Y."/>
            <person name="Ling L."/>
            <person name="Tan H."/>
            <person name="Chen R."/>
            <person name="Wang J."/>
            <person name="Yu J."/>
            <person name="Yang H."/>
        </authorList>
    </citation>
    <scope>NUCLEOTIDE SEQUENCE [LARGE SCALE GENOMIC DNA]</scope>
    <source>
        <strain>DSM 15242 / JCM 11007 / NBRC 100824 / MB4</strain>
    </source>
</reference>
<proteinExistence type="inferred from homology"/>
<name>RL7_CALS4</name>
<gene>
    <name evidence="1" type="primary">rplL</name>
    <name type="ordered locus">TTE2303</name>
</gene>
<organism>
    <name type="scientific">Caldanaerobacter subterraneus subsp. tengcongensis (strain DSM 15242 / JCM 11007 / NBRC 100824 / MB4)</name>
    <name type="common">Thermoanaerobacter tengcongensis</name>
    <dbReference type="NCBI Taxonomy" id="273068"/>
    <lineage>
        <taxon>Bacteria</taxon>
        <taxon>Bacillati</taxon>
        <taxon>Bacillota</taxon>
        <taxon>Clostridia</taxon>
        <taxon>Thermoanaerobacterales</taxon>
        <taxon>Thermoanaerobacteraceae</taxon>
        <taxon>Caldanaerobacter</taxon>
    </lineage>
</organism>
<sequence length="125" mass="13192">MSKEEILQAIKNMTVLELAELVKALEEEFGVSAAAPVAVAAAPAAGAPAAAPAEEKTEFDVILQEVGSDKIKVIKVVREITGLGLKEAKDLVDSVPKPIKEGVSKEEANQIKAKFEEVGAKVEIK</sequence>
<keyword id="KW-1185">Reference proteome</keyword>
<keyword id="KW-0687">Ribonucleoprotein</keyword>
<keyword id="KW-0689">Ribosomal protein</keyword>
<comment type="function">
    <text evidence="1">Forms part of the ribosomal stalk which helps the ribosome interact with GTP-bound translation factors. Is thus essential for accurate translation.</text>
</comment>
<comment type="subunit">
    <text evidence="1">Homodimer. Part of the ribosomal stalk of the 50S ribosomal subunit. Forms a multimeric L10(L12)X complex, where L10 forms an elongated spine to which 2 to 4 L12 dimers bind in a sequential fashion. Binds GTP-bound translation factors.</text>
</comment>
<comment type="similarity">
    <text evidence="1">Belongs to the bacterial ribosomal protein bL12 family.</text>
</comment>
<protein>
    <recommendedName>
        <fullName evidence="1">Large ribosomal subunit protein bL12</fullName>
    </recommendedName>
    <alternativeName>
        <fullName evidence="2">50S ribosomal protein L7/L12</fullName>
    </alternativeName>
</protein>
<evidence type="ECO:0000255" key="1">
    <source>
        <dbReference type="HAMAP-Rule" id="MF_00368"/>
    </source>
</evidence>
<evidence type="ECO:0000305" key="2"/>
<dbReference type="EMBL" id="AE008691">
    <property type="protein sequence ID" value="AAM25444.1"/>
    <property type="molecule type" value="Genomic_DNA"/>
</dbReference>
<dbReference type="RefSeq" id="WP_011026347.1">
    <property type="nucleotide sequence ID" value="NZ_JANUCV010000001.1"/>
</dbReference>
<dbReference type="SMR" id="Q8R7U5"/>
<dbReference type="STRING" id="273068.TTE2303"/>
<dbReference type="KEGG" id="tte:TTE2303"/>
<dbReference type="eggNOG" id="COG0222">
    <property type="taxonomic scope" value="Bacteria"/>
</dbReference>
<dbReference type="HOGENOM" id="CLU_086499_3_2_9"/>
<dbReference type="OrthoDB" id="9811748at2"/>
<dbReference type="Proteomes" id="UP000000555">
    <property type="component" value="Chromosome"/>
</dbReference>
<dbReference type="GO" id="GO:0022625">
    <property type="term" value="C:cytosolic large ribosomal subunit"/>
    <property type="evidence" value="ECO:0007669"/>
    <property type="project" value="TreeGrafter"/>
</dbReference>
<dbReference type="GO" id="GO:0003729">
    <property type="term" value="F:mRNA binding"/>
    <property type="evidence" value="ECO:0007669"/>
    <property type="project" value="TreeGrafter"/>
</dbReference>
<dbReference type="GO" id="GO:0003735">
    <property type="term" value="F:structural constituent of ribosome"/>
    <property type="evidence" value="ECO:0007669"/>
    <property type="project" value="InterPro"/>
</dbReference>
<dbReference type="GO" id="GO:0006412">
    <property type="term" value="P:translation"/>
    <property type="evidence" value="ECO:0007669"/>
    <property type="project" value="UniProtKB-UniRule"/>
</dbReference>
<dbReference type="CDD" id="cd00387">
    <property type="entry name" value="Ribosomal_L7_L12"/>
    <property type="match status" value="1"/>
</dbReference>
<dbReference type="FunFam" id="1.20.5.710:FF:000008">
    <property type="entry name" value="50S ribosomal protein L7/L12"/>
    <property type="match status" value="1"/>
</dbReference>
<dbReference type="FunFam" id="3.30.1390.10:FF:000001">
    <property type="entry name" value="50S ribosomal protein L7/L12"/>
    <property type="match status" value="1"/>
</dbReference>
<dbReference type="Gene3D" id="3.30.1390.10">
    <property type="match status" value="1"/>
</dbReference>
<dbReference type="Gene3D" id="1.20.5.710">
    <property type="entry name" value="Single helix bin"/>
    <property type="match status" value="1"/>
</dbReference>
<dbReference type="HAMAP" id="MF_00368">
    <property type="entry name" value="Ribosomal_bL12"/>
    <property type="match status" value="1"/>
</dbReference>
<dbReference type="InterPro" id="IPR000206">
    <property type="entry name" value="Ribosomal_bL12"/>
</dbReference>
<dbReference type="InterPro" id="IPR013823">
    <property type="entry name" value="Ribosomal_bL12_C"/>
</dbReference>
<dbReference type="InterPro" id="IPR014719">
    <property type="entry name" value="Ribosomal_bL12_C/ClpS-like"/>
</dbReference>
<dbReference type="InterPro" id="IPR008932">
    <property type="entry name" value="Ribosomal_bL12_oligo"/>
</dbReference>
<dbReference type="InterPro" id="IPR036235">
    <property type="entry name" value="Ribosomal_bL12_oligo_N_sf"/>
</dbReference>
<dbReference type="NCBIfam" id="TIGR00855">
    <property type="entry name" value="L12"/>
    <property type="match status" value="1"/>
</dbReference>
<dbReference type="PANTHER" id="PTHR45987">
    <property type="entry name" value="39S RIBOSOMAL PROTEIN L12"/>
    <property type="match status" value="1"/>
</dbReference>
<dbReference type="PANTHER" id="PTHR45987:SF4">
    <property type="entry name" value="LARGE RIBOSOMAL SUBUNIT PROTEIN BL12M"/>
    <property type="match status" value="1"/>
</dbReference>
<dbReference type="Pfam" id="PF00542">
    <property type="entry name" value="Ribosomal_L12"/>
    <property type="match status" value="1"/>
</dbReference>
<dbReference type="Pfam" id="PF16320">
    <property type="entry name" value="Ribosomal_L12_N"/>
    <property type="match status" value="1"/>
</dbReference>
<dbReference type="SUPFAM" id="SSF54736">
    <property type="entry name" value="ClpS-like"/>
    <property type="match status" value="1"/>
</dbReference>
<dbReference type="SUPFAM" id="SSF48300">
    <property type="entry name" value="Ribosomal protein L7/12, oligomerisation (N-terminal) domain"/>
    <property type="match status" value="1"/>
</dbReference>
<accession>Q8R7U5</accession>